<sequence length="628" mass="71534">MTKFDHHFDYVKISLASPSKIRSWGERTLPNGQIVGEVTKPETINYRTLKPEMDGLFCERIFGPVKDWECHCGKYKRFRYKGVVCERCGVEVTESKVRRHRMAYIELAAPVTHVWYLKGTTSYIALALDLTVKDLEKIVYFHSYVVINPGNYHKLNYKQLLEGYEWRNLEEKLSSHSSNIFGIEVGIGAEAIYKLLDNINLQNTVEILREESLRPPKLFKNPSTKFNKKMKRLRLLENFLATGANPSWMVLSVIPVIPPDLRPMVQLDGGRFATADLNEFYRRIINRNNRLARLKAILAPEIIIRNEKRMLQEAVDSLMDNGRRGRTVIGANNRPLKSLSDIIEGKQGRFRQNLLGKRVDYSGRSVIVVGPNLKLHQCGLPKEMALELFQPFVIHRLILQGLVNNIKAAKKIIQRNEVVVWTVLQEVIYGHPVLLNRAPTLHRLGIQAFEPILVEGRAIKLHPLVCPAFNADFDGDQMAVHVPLSLEAQAEARLLMLAPHNFLSPATGQPILMPSQDMVLGCYYLTTYNPAAISDSSHYFSNLDDALMAYQQNNITLHSLVWVRFSGLVNDSSNQMVISSKLNIDGTITKIFSDRIVKYDNDGQMVVQYIRTTAGRILFNKAIRESLL</sequence>
<reference key="1">
    <citation type="journal article" date="2004" name="J. Mol. Evol.">
        <title>Comparative analysis of the complete plastid genome sequence of the red alga Gracilaria tenuistipitata var. liui provides insights into the evolution of rhodoplasts and their relationship to other plastids.</title>
        <authorList>
            <person name="Hagopian J.C."/>
            <person name="Reis M."/>
            <person name="Kitajima J.P."/>
            <person name="Bhattacharya D."/>
            <person name="de Oliveira M.C."/>
        </authorList>
    </citation>
    <scope>NUCLEOTIDE SEQUENCE [LARGE SCALE GENOMIC DNA]</scope>
</reference>
<name>RPOC1_GRATL</name>
<organism>
    <name type="scientific">Gracilaria tenuistipitata var. liui</name>
    <name type="common">Red alga</name>
    <dbReference type="NCBI Taxonomy" id="285951"/>
    <lineage>
        <taxon>Eukaryota</taxon>
        <taxon>Rhodophyta</taxon>
        <taxon>Florideophyceae</taxon>
        <taxon>Rhodymeniophycidae</taxon>
        <taxon>Gracilariales</taxon>
        <taxon>Gracilariaceae</taxon>
        <taxon>Gracilaria</taxon>
        <taxon>Gracilaria tenuistipitata</taxon>
    </lineage>
</organism>
<geneLocation type="chloroplast"/>
<gene>
    <name evidence="1" type="primary">rpoC1</name>
    <name type="ordered locus">Grc000137</name>
</gene>
<dbReference type="EC" id="2.7.7.6" evidence="1"/>
<dbReference type="EMBL" id="AY673996">
    <property type="protein sequence ID" value="AAT79718.1"/>
    <property type="molecule type" value="Genomic_DNA"/>
</dbReference>
<dbReference type="RefSeq" id="YP_063643.1">
    <property type="nucleotide sequence ID" value="NC_006137.1"/>
</dbReference>
<dbReference type="SMR" id="Q6B8R7"/>
<dbReference type="GeneID" id="2944077"/>
<dbReference type="GO" id="GO:0009507">
    <property type="term" value="C:chloroplast"/>
    <property type="evidence" value="ECO:0007669"/>
    <property type="project" value="UniProtKB-SubCell"/>
</dbReference>
<dbReference type="GO" id="GO:0000428">
    <property type="term" value="C:DNA-directed RNA polymerase complex"/>
    <property type="evidence" value="ECO:0007669"/>
    <property type="project" value="UniProtKB-KW"/>
</dbReference>
<dbReference type="GO" id="GO:0005739">
    <property type="term" value="C:mitochondrion"/>
    <property type="evidence" value="ECO:0007669"/>
    <property type="project" value="GOC"/>
</dbReference>
<dbReference type="GO" id="GO:0003677">
    <property type="term" value="F:DNA binding"/>
    <property type="evidence" value="ECO:0007669"/>
    <property type="project" value="UniProtKB-UniRule"/>
</dbReference>
<dbReference type="GO" id="GO:0003899">
    <property type="term" value="F:DNA-directed RNA polymerase activity"/>
    <property type="evidence" value="ECO:0007669"/>
    <property type="project" value="UniProtKB-UniRule"/>
</dbReference>
<dbReference type="GO" id="GO:0000287">
    <property type="term" value="F:magnesium ion binding"/>
    <property type="evidence" value="ECO:0007669"/>
    <property type="project" value="UniProtKB-UniRule"/>
</dbReference>
<dbReference type="GO" id="GO:0008270">
    <property type="term" value="F:zinc ion binding"/>
    <property type="evidence" value="ECO:0007669"/>
    <property type="project" value="UniProtKB-UniRule"/>
</dbReference>
<dbReference type="GO" id="GO:0006351">
    <property type="term" value="P:DNA-templated transcription"/>
    <property type="evidence" value="ECO:0007669"/>
    <property type="project" value="UniProtKB-UniRule"/>
</dbReference>
<dbReference type="Gene3D" id="1.10.40.90">
    <property type="match status" value="1"/>
</dbReference>
<dbReference type="Gene3D" id="2.40.40.20">
    <property type="match status" value="1"/>
</dbReference>
<dbReference type="Gene3D" id="4.10.860.120">
    <property type="entry name" value="RNA polymerase II, clamp domain"/>
    <property type="match status" value="1"/>
</dbReference>
<dbReference type="Gene3D" id="1.10.274.100">
    <property type="entry name" value="RNA polymerase Rpb1, domain 3"/>
    <property type="match status" value="1"/>
</dbReference>
<dbReference type="HAMAP" id="MF_01323">
    <property type="entry name" value="RNApol_bact_RpoC1"/>
    <property type="match status" value="1"/>
</dbReference>
<dbReference type="InterPro" id="IPR012755">
    <property type="entry name" value="DNA-dir_RpoC1_gamma"/>
</dbReference>
<dbReference type="InterPro" id="IPR045867">
    <property type="entry name" value="DNA-dir_RpoC_beta_prime"/>
</dbReference>
<dbReference type="InterPro" id="IPR000722">
    <property type="entry name" value="RNA_pol_asu"/>
</dbReference>
<dbReference type="InterPro" id="IPR006592">
    <property type="entry name" value="RNA_pol_N"/>
</dbReference>
<dbReference type="InterPro" id="IPR007080">
    <property type="entry name" value="RNA_pol_Rpb1_1"/>
</dbReference>
<dbReference type="InterPro" id="IPR007066">
    <property type="entry name" value="RNA_pol_Rpb1_3"/>
</dbReference>
<dbReference type="InterPro" id="IPR042102">
    <property type="entry name" value="RNA_pol_Rpb1_3_sf"/>
</dbReference>
<dbReference type="InterPro" id="IPR044893">
    <property type="entry name" value="RNA_pol_Rpb1_clamp_domain"/>
</dbReference>
<dbReference type="InterPro" id="IPR034678">
    <property type="entry name" value="RNApol_RpoC1"/>
</dbReference>
<dbReference type="NCBIfam" id="NF002729">
    <property type="entry name" value="PRK02625.1"/>
    <property type="match status" value="1"/>
</dbReference>
<dbReference type="NCBIfam" id="TIGR02387">
    <property type="entry name" value="rpoC1_cyan"/>
    <property type="match status" value="1"/>
</dbReference>
<dbReference type="PANTHER" id="PTHR19376">
    <property type="entry name" value="DNA-DIRECTED RNA POLYMERASE"/>
    <property type="match status" value="1"/>
</dbReference>
<dbReference type="PANTHER" id="PTHR19376:SF54">
    <property type="entry name" value="DNA-DIRECTED RNA POLYMERASE SUBUNIT BETA"/>
    <property type="match status" value="1"/>
</dbReference>
<dbReference type="Pfam" id="PF04997">
    <property type="entry name" value="RNA_pol_Rpb1_1"/>
    <property type="match status" value="1"/>
</dbReference>
<dbReference type="Pfam" id="PF00623">
    <property type="entry name" value="RNA_pol_Rpb1_2"/>
    <property type="match status" value="2"/>
</dbReference>
<dbReference type="Pfam" id="PF04983">
    <property type="entry name" value="RNA_pol_Rpb1_3"/>
    <property type="match status" value="1"/>
</dbReference>
<dbReference type="SMART" id="SM00663">
    <property type="entry name" value="RPOLA_N"/>
    <property type="match status" value="1"/>
</dbReference>
<dbReference type="SUPFAM" id="SSF64484">
    <property type="entry name" value="beta and beta-prime subunits of DNA dependent RNA-polymerase"/>
    <property type="match status" value="1"/>
</dbReference>
<evidence type="ECO:0000255" key="1">
    <source>
        <dbReference type="HAMAP-Rule" id="MF_01323"/>
    </source>
</evidence>
<feature type="chain" id="PRO_0000067873" description="DNA-directed RNA polymerase subunit beta'">
    <location>
        <begin position="1"/>
        <end position="628"/>
    </location>
</feature>
<feature type="binding site" evidence="1">
    <location>
        <position position="70"/>
    </location>
    <ligand>
        <name>Zn(2+)</name>
        <dbReference type="ChEBI" id="CHEBI:29105"/>
    </ligand>
</feature>
<feature type="binding site" evidence="1">
    <location>
        <position position="72"/>
    </location>
    <ligand>
        <name>Zn(2+)</name>
        <dbReference type="ChEBI" id="CHEBI:29105"/>
    </ligand>
</feature>
<feature type="binding site" evidence="1">
    <location>
        <position position="85"/>
    </location>
    <ligand>
        <name>Zn(2+)</name>
        <dbReference type="ChEBI" id="CHEBI:29105"/>
    </ligand>
</feature>
<feature type="binding site" evidence="1">
    <location>
        <position position="88"/>
    </location>
    <ligand>
        <name>Zn(2+)</name>
        <dbReference type="ChEBI" id="CHEBI:29105"/>
    </ligand>
</feature>
<feature type="binding site" evidence="1">
    <location>
        <position position="472"/>
    </location>
    <ligand>
        <name>Mg(2+)</name>
        <dbReference type="ChEBI" id="CHEBI:18420"/>
    </ligand>
</feature>
<feature type="binding site" evidence="1">
    <location>
        <position position="474"/>
    </location>
    <ligand>
        <name>Mg(2+)</name>
        <dbReference type="ChEBI" id="CHEBI:18420"/>
    </ligand>
</feature>
<feature type="binding site" evidence="1">
    <location>
        <position position="476"/>
    </location>
    <ligand>
        <name>Mg(2+)</name>
        <dbReference type="ChEBI" id="CHEBI:18420"/>
    </ligand>
</feature>
<accession>Q6B8R7</accession>
<proteinExistence type="inferred from homology"/>
<keyword id="KW-0150">Chloroplast</keyword>
<keyword id="KW-0240">DNA-directed RNA polymerase</keyword>
<keyword id="KW-0460">Magnesium</keyword>
<keyword id="KW-0479">Metal-binding</keyword>
<keyword id="KW-0548">Nucleotidyltransferase</keyword>
<keyword id="KW-0934">Plastid</keyword>
<keyword id="KW-0804">Transcription</keyword>
<keyword id="KW-0808">Transferase</keyword>
<keyword id="KW-0862">Zinc</keyword>
<comment type="function">
    <text evidence="1">DNA-dependent RNA polymerase catalyzes the transcription of DNA into RNA using the four ribonucleoside triphosphates as substrates.</text>
</comment>
<comment type="catalytic activity">
    <reaction evidence="1">
        <text>RNA(n) + a ribonucleoside 5'-triphosphate = RNA(n+1) + diphosphate</text>
        <dbReference type="Rhea" id="RHEA:21248"/>
        <dbReference type="Rhea" id="RHEA-COMP:14527"/>
        <dbReference type="Rhea" id="RHEA-COMP:17342"/>
        <dbReference type="ChEBI" id="CHEBI:33019"/>
        <dbReference type="ChEBI" id="CHEBI:61557"/>
        <dbReference type="ChEBI" id="CHEBI:140395"/>
        <dbReference type="EC" id="2.7.7.6"/>
    </reaction>
</comment>
<comment type="cofactor">
    <cofactor evidence="1">
        <name>Mg(2+)</name>
        <dbReference type="ChEBI" id="CHEBI:18420"/>
    </cofactor>
    <text evidence="1">Binds 1 Mg(2+) ion per subunit.</text>
</comment>
<comment type="cofactor">
    <cofactor evidence="1">
        <name>Zn(2+)</name>
        <dbReference type="ChEBI" id="CHEBI:29105"/>
    </cofactor>
    <text evidence="1">Binds 1 Zn(2+) ion per subunit.</text>
</comment>
<comment type="subunit">
    <text evidence="1">In plastids the minimal PEP RNA polymerase catalytic core is composed of four subunits: alpha, beta, beta', and beta''. When a (nuclear-encoded) sigma factor is associated with the core the holoenzyme is formed, which can initiate transcription.</text>
</comment>
<comment type="subcellular location">
    <subcellularLocation>
        <location evidence="1">Plastid</location>
        <location evidence="1">Chloroplast</location>
    </subcellularLocation>
</comment>
<comment type="similarity">
    <text evidence="1">Belongs to the RNA polymerase beta' chain family. RpoC1 subfamily.</text>
</comment>
<protein>
    <recommendedName>
        <fullName evidence="1">DNA-directed RNA polymerase subunit beta'</fullName>
        <ecNumber evidence="1">2.7.7.6</ecNumber>
    </recommendedName>
    <alternativeName>
        <fullName evidence="1">PEP</fullName>
    </alternativeName>
    <alternativeName>
        <fullName evidence="1">Plastid-encoded RNA polymerase subunit beta'</fullName>
        <shortName evidence="1">RNA polymerase subunit beta'</shortName>
    </alternativeName>
</protein>